<dbReference type="EC" id="2.7.4.22" evidence="1"/>
<dbReference type="EMBL" id="CP000513">
    <property type="protein sequence ID" value="ABQ13089.1"/>
    <property type="molecule type" value="Genomic_DNA"/>
</dbReference>
<dbReference type="RefSeq" id="WP_012031053.1">
    <property type="nucleotide sequence ID" value="NC_009446.1"/>
</dbReference>
<dbReference type="SMR" id="A5EV27"/>
<dbReference type="STRING" id="246195.DNO_0721"/>
<dbReference type="KEGG" id="dno:DNO_0721"/>
<dbReference type="eggNOG" id="COG0528">
    <property type="taxonomic scope" value="Bacteria"/>
</dbReference>
<dbReference type="HOGENOM" id="CLU_033861_0_0_6"/>
<dbReference type="OrthoDB" id="9807458at2"/>
<dbReference type="UniPathway" id="UPA00159">
    <property type="reaction ID" value="UER00275"/>
</dbReference>
<dbReference type="Proteomes" id="UP000000248">
    <property type="component" value="Chromosome"/>
</dbReference>
<dbReference type="GO" id="GO:0005829">
    <property type="term" value="C:cytosol"/>
    <property type="evidence" value="ECO:0007669"/>
    <property type="project" value="TreeGrafter"/>
</dbReference>
<dbReference type="GO" id="GO:0005524">
    <property type="term" value="F:ATP binding"/>
    <property type="evidence" value="ECO:0007669"/>
    <property type="project" value="UniProtKB-KW"/>
</dbReference>
<dbReference type="GO" id="GO:0033862">
    <property type="term" value="F:UMP kinase activity"/>
    <property type="evidence" value="ECO:0007669"/>
    <property type="project" value="UniProtKB-EC"/>
</dbReference>
<dbReference type="GO" id="GO:0044210">
    <property type="term" value="P:'de novo' CTP biosynthetic process"/>
    <property type="evidence" value="ECO:0007669"/>
    <property type="project" value="UniProtKB-UniRule"/>
</dbReference>
<dbReference type="GO" id="GO:0006225">
    <property type="term" value="P:UDP biosynthetic process"/>
    <property type="evidence" value="ECO:0007669"/>
    <property type="project" value="TreeGrafter"/>
</dbReference>
<dbReference type="CDD" id="cd04254">
    <property type="entry name" value="AAK_UMPK-PyrH-Ec"/>
    <property type="match status" value="1"/>
</dbReference>
<dbReference type="FunFam" id="3.40.1160.10:FF:000001">
    <property type="entry name" value="Uridylate kinase"/>
    <property type="match status" value="1"/>
</dbReference>
<dbReference type="Gene3D" id="3.40.1160.10">
    <property type="entry name" value="Acetylglutamate kinase-like"/>
    <property type="match status" value="1"/>
</dbReference>
<dbReference type="HAMAP" id="MF_01220_B">
    <property type="entry name" value="PyrH_B"/>
    <property type="match status" value="1"/>
</dbReference>
<dbReference type="InterPro" id="IPR036393">
    <property type="entry name" value="AceGlu_kinase-like_sf"/>
</dbReference>
<dbReference type="InterPro" id="IPR001048">
    <property type="entry name" value="Asp/Glu/Uridylate_kinase"/>
</dbReference>
<dbReference type="InterPro" id="IPR011817">
    <property type="entry name" value="Uridylate_kinase"/>
</dbReference>
<dbReference type="InterPro" id="IPR015963">
    <property type="entry name" value="Uridylate_kinase_bac"/>
</dbReference>
<dbReference type="NCBIfam" id="TIGR02075">
    <property type="entry name" value="pyrH_bact"/>
    <property type="match status" value="1"/>
</dbReference>
<dbReference type="PANTHER" id="PTHR42833">
    <property type="entry name" value="URIDYLATE KINASE"/>
    <property type="match status" value="1"/>
</dbReference>
<dbReference type="PANTHER" id="PTHR42833:SF4">
    <property type="entry name" value="URIDYLATE KINASE PUMPKIN, CHLOROPLASTIC"/>
    <property type="match status" value="1"/>
</dbReference>
<dbReference type="Pfam" id="PF00696">
    <property type="entry name" value="AA_kinase"/>
    <property type="match status" value="1"/>
</dbReference>
<dbReference type="PIRSF" id="PIRSF005650">
    <property type="entry name" value="Uridylate_kin"/>
    <property type="match status" value="1"/>
</dbReference>
<dbReference type="SUPFAM" id="SSF53633">
    <property type="entry name" value="Carbamate kinase-like"/>
    <property type="match status" value="1"/>
</dbReference>
<organism>
    <name type="scientific">Dichelobacter nodosus (strain VCS1703A)</name>
    <dbReference type="NCBI Taxonomy" id="246195"/>
    <lineage>
        <taxon>Bacteria</taxon>
        <taxon>Pseudomonadati</taxon>
        <taxon>Pseudomonadota</taxon>
        <taxon>Gammaproteobacteria</taxon>
        <taxon>Cardiobacteriales</taxon>
        <taxon>Cardiobacteriaceae</taxon>
        <taxon>Dichelobacter</taxon>
    </lineage>
</organism>
<keyword id="KW-0067">ATP-binding</keyword>
<keyword id="KW-0963">Cytoplasm</keyword>
<keyword id="KW-0418">Kinase</keyword>
<keyword id="KW-0547">Nucleotide-binding</keyword>
<keyword id="KW-0665">Pyrimidine biosynthesis</keyword>
<keyword id="KW-1185">Reference proteome</keyword>
<keyword id="KW-0808">Transferase</keyword>
<sequence length="241" mass="26376">MSTKPKPRYRRILLKMSGEALMGNQAFGLDPKVVNRIADEVRQLHEAGVQVAIVIGGGNLFRGAQLAALGMERVTGDHMGMLATLMNSLAMQDALEQIGVPVRTVSALRVDEICEPYIRRRAIRHLEKGNVVISAAGTGNPFFTTDSAASLRAIELEVDAMFKATKVDGIYTKDPNRYDDAVKYHDLSYQKALTDNLGVMDATSIVMCRDNHMPLIVFDMTKAGEIIRAVFGEDVGTIVHA</sequence>
<feature type="chain" id="PRO_0000323840" description="Uridylate kinase">
    <location>
        <begin position="1"/>
        <end position="241"/>
    </location>
</feature>
<feature type="binding site" evidence="1">
    <location>
        <begin position="15"/>
        <end position="18"/>
    </location>
    <ligand>
        <name>ATP</name>
        <dbReference type="ChEBI" id="CHEBI:30616"/>
    </ligand>
</feature>
<feature type="binding site" evidence="1">
    <location>
        <position position="57"/>
    </location>
    <ligand>
        <name>UMP</name>
        <dbReference type="ChEBI" id="CHEBI:57865"/>
    </ligand>
</feature>
<feature type="binding site" evidence="1">
    <location>
        <position position="58"/>
    </location>
    <ligand>
        <name>ATP</name>
        <dbReference type="ChEBI" id="CHEBI:30616"/>
    </ligand>
</feature>
<feature type="binding site" evidence="1">
    <location>
        <position position="62"/>
    </location>
    <ligand>
        <name>ATP</name>
        <dbReference type="ChEBI" id="CHEBI:30616"/>
    </ligand>
</feature>
<feature type="binding site" evidence="1">
    <location>
        <position position="77"/>
    </location>
    <ligand>
        <name>UMP</name>
        <dbReference type="ChEBI" id="CHEBI:57865"/>
    </ligand>
</feature>
<feature type="binding site" evidence="1">
    <location>
        <begin position="138"/>
        <end position="145"/>
    </location>
    <ligand>
        <name>UMP</name>
        <dbReference type="ChEBI" id="CHEBI:57865"/>
    </ligand>
</feature>
<feature type="binding site" evidence="1">
    <location>
        <position position="165"/>
    </location>
    <ligand>
        <name>ATP</name>
        <dbReference type="ChEBI" id="CHEBI:30616"/>
    </ligand>
</feature>
<feature type="binding site" evidence="1">
    <location>
        <position position="171"/>
    </location>
    <ligand>
        <name>ATP</name>
        <dbReference type="ChEBI" id="CHEBI:30616"/>
    </ligand>
</feature>
<feature type="binding site" evidence="1">
    <location>
        <position position="174"/>
    </location>
    <ligand>
        <name>ATP</name>
        <dbReference type="ChEBI" id="CHEBI:30616"/>
    </ligand>
</feature>
<gene>
    <name evidence="1" type="primary">pyrH</name>
    <name type="ordered locus">DNO_0721</name>
</gene>
<name>PYRH_DICNV</name>
<accession>A5EV27</accession>
<reference key="1">
    <citation type="journal article" date="2007" name="Nat. Biotechnol.">
        <title>Genome sequence and identification of candidate vaccine antigens from the animal pathogen Dichelobacter nodosus.</title>
        <authorList>
            <person name="Myers G.S.A."/>
            <person name="Parker D."/>
            <person name="Al-Hasani K."/>
            <person name="Kennan R.M."/>
            <person name="Seemann T."/>
            <person name="Ren Q."/>
            <person name="Badger J.H."/>
            <person name="Selengut J.D."/>
            <person name="Deboy R.T."/>
            <person name="Tettelin H."/>
            <person name="Boyce J.D."/>
            <person name="McCarl V.P."/>
            <person name="Han X."/>
            <person name="Nelson W.C."/>
            <person name="Madupu R."/>
            <person name="Mohamoud Y."/>
            <person name="Holley T."/>
            <person name="Fedorova N."/>
            <person name="Khouri H."/>
            <person name="Bottomley S.P."/>
            <person name="Whittington R.J."/>
            <person name="Adler B."/>
            <person name="Songer J.G."/>
            <person name="Rood J.I."/>
            <person name="Paulsen I.T."/>
        </authorList>
    </citation>
    <scope>NUCLEOTIDE SEQUENCE [LARGE SCALE GENOMIC DNA]</scope>
    <source>
        <strain>VCS1703A</strain>
    </source>
</reference>
<comment type="function">
    <text evidence="1">Catalyzes the reversible phosphorylation of UMP to UDP.</text>
</comment>
<comment type="catalytic activity">
    <reaction evidence="1">
        <text>UMP + ATP = UDP + ADP</text>
        <dbReference type="Rhea" id="RHEA:24400"/>
        <dbReference type="ChEBI" id="CHEBI:30616"/>
        <dbReference type="ChEBI" id="CHEBI:57865"/>
        <dbReference type="ChEBI" id="CHEBI:58223"/>
        <dbReference type="ChEBI" id="CHEBI:456216"/>
        <dbReference type="EC" id="2.7.4.22"/>
    </reaction>
</comment>
<comment type="activity regulation">
    <text evidence="1">Inhibited by UTP.</text>
</comment>
<comment type="pathway">
    <text evidence="1">Pyrimidine metabolism; CTP biosynthesis via de novo pathway; UDP from UMP (UMPK route): step 1/1.</text>
</comment>
<comment type="subunit">
    <text evidence="1">Homohexamer.</text>
</comment>
<comment type="subcellular location">
    <subcellularLocation>
        <location evidence="1">Cytoplasm</location>
    </subcellularLocation>
</comment>
<comment type="similarity">
    <text evidence="1">Belongs to the UMP kinase family.</text>
</comment>
<evidence type="ECO:0000255" key="1">
    <source>
        <dbReference type="HAMAP-Rule" id="MF_01220"/>
    </source>
</evidence>
<protein>
    <recommendedName>
        <fullName evidence="1">Uridylate kinase</fullName>
        <shortName evidence="1">UK</shortName>
        <ecNumber evidence="1">2.7.4.22</ecNumber>
    </recommendedName>
    <alternativeName>
        <fullName evidence="1">Uridine monophosphate kinase</fullName>
        <shortName evidence="1">UMP kinase</shortName>
        <shortName evidence="1">UMPK</shortName>
    </alternativeName>
</protein>
<proteinExistence type="inferred from homology"/>